<gene>
    <name evidence="5" type="primary">mdpK</name>
</gene>
<protein>
    <recommendedName>
        <fullName evidence="6">Tert-butanol monooxygenase / tert-amyl alcohol desaturase reductase subunit</fullName>
        <ecNumber evidence="6">1.-.-.-</ecNumber>
    </recommendedName>
</protein>
<feature type="chain" id="PRO_0000455121" description="Tert-butanol monooxygenase / tert-amyl alcohol desaturase reductase subunit">
    <location>
        <begin position="1"/>
        <end position="337"/>
    </location>
</feature>
<feature type="domain" description="FAD-binding FR-type" evidence="2">
    <location>
        <begin position="9"/>
        <end position="114"/>
    </location>
</feature>
<feature type="domain" description="2Fe-2S ferredoxin-type" evidence="1">
    <location>
        <begin position="254"/>
        <end position="337"/>
    </location>
</feature>
<feature type="binding site" evidence="1">
    <location>
        <position position="288"/>
    </location>
    <ligand>
        <name>[2Fe-2S] cluster</name>
        <dbReference type="ChEBI" id="CHEBI:190135"/>
    </ligand>
</feature>
<feature type="binding site" evidence="1">
    <location>
        <position position="293"/>
    </location>
    <ligand>
        <name>[2Fe-2S] cluster</name>
        <dbReference type="ChEBI" id="CHEBI:190135"/>
    </ligand>
</feature>
<feature type="binding site" evidence="1">
    <location>
        <position position="296"/>
    </location>
    <ligand>
        <name>[2Fe-2S] cluster</name>
        <dbReference type="ChEBI" id="CHEBI:190135"/>
    </ligand>
</feature>
<feature type="binding site" evidence="1">
    <location>
        <position position="324"/>
    </location>
    <ligand>
        <name>[2Fe-2S] cluster</name>
        <dbReference type="ChEBI" id="CHEBI:190135"/>
    </ligand>
</feature>
<evidence type="ECO:0000255" key="1">
    <source>
        <dbReference type="PROSITE-ProRule" id="PRU00465"/>
    </source>
</evidence>
<evidence type="ECO:0000255" key="2">
    <source>
        <dbReference type="PROSITE-ProRule" id="PRU00716"/>
    </source>
</evidence>
<evidence type="ECO:0000269" key="3">
    <source>
    </source>
</evidence>
<evidence type="ECO:0000269" key="4">
    <source ref="3"/>
</evidence>
<evidence type="ECO:0000303" key="5">
    <source ref="1"/>
</evidence>
<evidence type="ECO:0000305" key="6"/>
<evidence type="ECO:0000305" key="7">
    <source>
    </source>
</evidence>
<sequence length="337" mass="36966">MYQLSHTGKYPKTALNLRVRQITYQGIGINAYEFVREDGGELEEFTAGAHVDLYFRDGRVRQYSLCNDPAERRRYLIAVLRDDNGRGGSIAIHERVHTQRLVAVGHPRNNFPLIEGAPHQVLLAGGIGITPLKAMVHRLERMGADYTLHYCAKSSAHAAFQEELAPMAAKGRVIMHFDGGNPAKGLDIAALLRRYEPGWQLYYCGPPGFMEACTRACTHWPAEAVHFEYFVGAPVLPDDGVPQDIGSDALALGFQIKIASTGTVLTVPNDKSIAQVLGEHGIEVPTSCQSGLCGTCKVRYLAGDVEHRDYLLSAEARTQFLTTCVSRSKGATLVLDL</sequence>
<name>MDPK_AQUTE</name>
<accession>G8FRC6</accession>
<keyword id="KW-0001">2Fe-2S</keyword>
<keyword id="KW-0249">Electron transport</keyword>
<keyword id="KW-0285">Flavoprotein</keyword>
<keyword id="KW-0408">Iron</keyword>
<keyword id="KW-0411">Iron-sulfur</keyword>
<keyword id="KW-0479">Metal-binding</keyword>
<keyword id="KW-0560">Oxidoreductase</keyword>
<keyword id="KW-0813">Transport</keyword>
<comment type="function">
    <text evidence="3 7">Reductase component of a two-component system involved in the degradation of tertiary alcohols such as tert-butyl alcohol (TBA) and tert-amyl alcohol (TAA) (PubMed:22194447). MdpK probably provides electrons via its [2Fe-2S] iron-sulfur cluster to the MdpJ oxygenase subunit (Probable).</text>
</comment>
<comment type="cofactor">
    <cofactor evidence="1">
        <name>[2Fe-2S] cluster</name>
        <dbReference type="ChEBI" id="CHEBI:190135"/>
    </cofactor>
    <text evidence="1">Binds 1 2Fe-2S cluster.</text>
</comment>
<comment type="subunit">
    <text evidence="3">This two-component enzyme is composed of an oxygenase (MdpJ) and a reductase (MdpK).</text>
</comment>
<comment type="induction">
    <text evidence="4">Induced in the presence of tert-butyl alcohol (TBA).</text>
</comment>
<comment type="similarity">
    <text evidence="6">Belongs to the PDR/VanB family.</text>
</comment>
<organism>
    <name type="scientific">Aquincola tertiaricarbonis</name>
    <dbReference type="NCBI Taxonomy" id="391953"/>
    <lineage>
        <taxon>Bacteria</taxon>
        <taxon>Pseudomonadati</taxon>
        <taxon>Pseudomonadota</taxon>
        <taxon>Betaproteobacteria</taxon>
        <taxon>Burkholderiales</taxon>
        <taxon>Sphaerotilaceae</taxon>
        <taxon>Aquincola</taxon>
    </lineage>
</organism>
<reference key="1">
    <citation type="submission" date="2011-05" db="EMBL/GenBank/DDBJ databases">
        <authorList>
            <person name="Schaefer F."/>
            <person name="Breuer U."/>
            <person name="Benndorf D."/>
            <person name="von Bergen M."/>
            <person name="Harms H."/>
            <person name="Mueller R.H."/>
        </authorList>
    </citation>
    <scope>NUCLEOTIDE SEQUENCE [GENOMIC DNA]</scope>
    <source>
        <strain>L108</strain>
    </source>
</reference>
<reference key="2">
    <citation type="journal article" date="2012" name="J. Bacteriol.">
        <title>Bacterial degradation of tert-amyl alcohol proceeds via hemiterpene 2-methyl-3-buten-2-ol by employing the tertiary alcohol desaturase function of the Rieske nonheme mononuclear iron oxygenase MdpJ.</title>
        <authorList>
            <person name="Schuster J."/>
            <person name="Schaefer F."/>
            <person name="Huebler N."/>
            <person name="Brandt A."/>
            <person name="Rosell M."/>
            <person name="Haertig C."/>
            <person name="Harms H."/>
            <person name="Mueller R.H."/>
            <person name="Rohwerder T."/>
        </authorList>
    </citation>
    <scope>NUCLEOTIDE SEQUENCE [GENOMIC DNA]</scope>
    <scope>FUNCTION</scope>
    <scope>SUBUNIT</scope>
    <source>
        <strain>L108</strain>
    </source>
</reference>
<reference key="3">
    <citation type="journal article" date="2007" name="Eng. Life Sci.">
        <title>Growth of Aquincola tertiaricarbonis L108 on tert-butyl alcohol leads to the induction of a phthalate dioxygenase-related protein and its associated oxidoreductase subunit.</title>
        <authorList>
            <person name="Schaefer F."/>
            <person name="Breuer U."/>
            <person name="Benndorf D."/>
            <person name="von Bergen M."/>
            <person name="Harms H."/>
            <person name="Mueller R.H."/>
        </authorList>
    </citation>
    <scope>INDUCTION</scope>
    <source>
        <strain>L108</strain>
    </source>
</reference>
<reference key="4">
    <citation type="journal article" date="2012" name="Appl. Environ. Microbiol.">
        <title>Synthesis of short-chain diols and unsaturated alcohols from secondary alcohol substrates by the Rieske nonheme mononuclear iron oxygenase MdpJ.</title>
        <authorList>
            <person name="Schaefer F."/>
            <person name="Schuster J."/>
            <person name="Wuerz B."/>
            <person name="Haertig C."/>
            <person name="Harms H."/>
            <person name="Mueller R.H."/>
            <person name="Rohwerder T."/>
        </authorList>
    </citation>
    <scope>FUNCTION</scope>
    <source>
        <strain>L108</strain>
    </source>
</reference>
<proteinExistence type="evidence at protein level"/>
<dbReference type="EC" id="1.-.-.-" evidence="6"/>
<dbReference type="EMBL" id="JN033364">
    <property type="protein sequence ID" value="AER12132.1"/>
    <property type="molecule type" value="Genomic_DNA"/>
</dbReference>
<dbReference type="EMBL" id="JQ062962">
    <property type="protein sequence ID" value="AEX20407.1"/>
    <property type="molecule type" value="Genomic_DNA"/>
</dbReference>
<dbReference type="SMR" id="G8FRC6"/>
<dbReference type="KEGG" id="ag:AEX20407"/>
<dbReference type="GO" id="GO:0051537">
    <property type="term" value="F:2 iron, 2 sulfur cluster binding"/>
    <property type="evidence" value="ECO:0007669"/>
    <property type="project" value="UniProtKB-KW"/>
</dbReference>
<dbReference type="GO" id="GO:0046872">
    <property type="term" value="F:metal ion binding"/>
    <property type="evidence" value="ECO:0007669"/>
    <property type="project" value="UniProtKB-KW"/>
</dbReference>
<dbReference type="GO" id="GO:0016491">
    <property type="term" value="F:oxidoreductase activity"/>
    <property type="evidence" value="ECO:0007669"/>
    <property type="project" value="UniProtKB-KW"/>
</dbReference>
<dbReference type="CDD" id="cd00207">
    <property type="entry name" value="fer2"/>
    <property type="match status" value="1"/>
</dbReference>
<dbReference type="CDD" id="cd06185">
    <property type="entry name" value="PDR_like"/>
    <property type="match status" value="1"/>
</dbReference>
<dbReference type="Gene3D" id="3.10.20.30">
    <property type="match status" value="1"/>
</dbReference>
<dbReference type="Gene3D" id="3.40.50.80">
    <property type="entry name" value="Nucleotide-binding domain of ferredoxin-NADP reductase (FNR) module"/>
    <property type="match status" value="1"/>
</dbReference>
<dbReference type="Gene3D" id="2.40.30.10">
    <property type="entry name" value="Translation factors"/>
    <property type="match status" value="1"/>
</dbReference>
<dbReference type="InterPro" id="IPR036010">
    <property type="entry name" value="2Fe-2S_ferredoxin-like_sf"/>
</dbReference>
<dbReference type="InterPro" id="IPR001041">
    <property type="entry name" value="2Fe-2S_ferredoxin-type"/>
</dbReference>
<dbReference type="InterPro" id="IPR006058">
    <property type="entry name" value="2Fe2S_fd_BS"/>
</dbReference>
<dbReference type="InterPro" id="IPR012675">
    <property type="entry name" value="Beta-grasp_dom_sf"/>
</dbReference>
<dbReference type="InterPro" id="IPR017927">
    <property type="entry name" value="FAD-bd_FR_type"/>
</dbReference>
<dbReference type="InterPro" id="IPR039261">
    <property type="entry name" value="FNR_nucleotide-bd"/>
</dbReference>
<dbReference type="InterPro" id="IPR050415">
    <property type="entry name" value="MRET"/>
</dbReference>
<dbReference type="InterPro" id="IPR001433">
    <property type="entry name" value="OxRdtase_FAD/NAD-bd"/>
</dbReference>
<dbReference type="InterPro" id="IPR017938">
    <property type="entry name" value="Riboflavin_synthase-like_b-brl"/>
</dbReference>
<dbReference type="PANTHER" id="PTHR47354:SF1">
    <property type="entry name" value="CARNITINE MONOOXYGENASE REDUCTASE SUBUNIT"/>
    <property type="match status" value="1"/>
</dbReference>
<dbReference type="PANTHER" id="PTHR47354">
    <property type="entry name" value="NADH OXIDOREDUCTASE HCR"/>
    <property type="match status" value="1"/>
</dbReference>
<dbReference type="Pfam" id="PF00111">
    <property type="entry name" value="Fer2"/>
    <property type="match status" value="1"/>
</dbReference>
<dbReference type="Pfam" id="PF00175">
    <property type="entry name" value="NAD_binding_1"/>
    <property type="match status" value="1"/>
</dbReference>
<dbReference type="PRINTS" id="PR00409">
    <property type="entry name" value="PHDIOXRDTASE"/>
</dbReference>
<dbReference type="SUPFAM" id="SSF54292">
    <property type="entry name" value="2Fe-2S ferredoxin-like"/>
    <property type="match status" value="1"/>
</dbReference>
<dbReference type="SUPFAM" id="SSF52343">
    <property type="entry name" value="Ferredoxin reductase-like, C-terminal NADP-linked domain"/>
    <property type="match status" value="1"/>
</dbReference>
<dbReference type="SUPFAM" id="SSF63380">
    <property type="entry name" value="Riboflavin synthase domain-like"/>
    <property type="match status" value="1"/>
</dbReference>
<dbReference type="PROSITE" id="PS00197">
    <property type="entry name" value="2FE2S_FER_1"/>
    <property type="match status" value="1"/>
</dbReference>
<dbReference type="PROSITE" id="PS51085">
    <property type="entry name" value="2FE2S_FER_2"/>
    <property type="match status" value="1"/>
</dbReference>
<dbReference type="PROSITE" id="PS51384">
    <property type="entry name" value="FAD_FR"/>
    <property type="match status" value="1"/>
</dbReference>